<accession>P87377</accession>
<accession>A2BDB3</accession>
<accession>B1H1N4</accession>
<accession>B7ZS85</accession>
<accession>P79930</accession>
<accession>P87386</accession>
<gene>
    <name type="primary">vegt-a</name>
    <name type="synonym">apod</name>
    <name type="synonym">brat</name>
    <name type="synonym">vegt</name>
</gene>
<reference key="1">
    <citation type="journal article" date="1996" name="Development">
        <title>Xenopus VegT RNA is localized to the vegetal cortex during oogenesis and encodes a novel T-box transcription factor involved in mesodermal patterning.</title>
        <authorList>
            <person name="Zhang J."/>
            <person name="King M.L."/>
        </authorList>
    </citation>
    <scope>NUCLEOTIDE SEQUENCE [MRNA] (ISOFORM 1)</scope>
    <scope>FUNCTION</scope>
    <scope>SUBCELLULAR LOCATION</scope>
    <scope>TISSUE SPECIFICITY</scope>
    <scope>DEVELOPMENTAL STAGE</scope>
    <source>
        <tissue>Oocyte</tissue>
    </source>
</reference>
<reference key="2">
    <citation type="submission" date="1998-01" db="EMBL/GenBank/DDBJ databases">
        <authorList>
            <person name="Zhang J."/>
            <person name="King M.L."/>
        </authorList>
    </citation>
    <scope>SEQUENCE REVISION TO 209 AND 396-455</scope>
</reference>
<reference key="3">
    <citation type="journal article" date="1996" name="Development">
        <title>The Xenopus T-box gene, Antipodean, encodes a vegetally localised maternal mRNA and can trigger mesoderm formation.</title>
        <authorList>
            <person name="Stennard F."/>
            <person name="Carnac G."/>
            <person name="Gurdon J.B."/>
        </authorList>
    </citation>
    <scope>NUCLEOTIDE SEQUENCE [MRNA] (ISOFORM 2)</scope>
    <scope>FUNCTION</scope>
    <scope>TISSUE SPECIFICITY</scope>
    <scope>DEVELOPMENTAL STAGE</scope>
    <source>
        <tissue>Gastrula</tissue>
    </source>
</reference>
<reference key="4">
    <citation type="journal article" date="1997" name="Development">
        <title>A vegetally localized T-box transcription factor in Xenopus eggs specifies mesoderm and endoderm and is essential for embryonic mesoderm formation.</title>
        <authorList>
            <person name="Horb M.E."/>
            <person name="Thomsen G.H."/>
        </authorList>
    </citation>
    <scope>NUCLEOTIDE SEQUENCE [MRNA] (ISOFORM 1)</scope>
    <scope>FUNCTION</scope>
    <scope>TISSUE SPECIFICITY</scope>
    <scope>DEVELOPMENTAL STAGE</scope>
    <scope>INDUCTION</scope>
    <source>
        <tissue>Gastrula</tissue>
    </source>
</reference>
<reference key="5">
    <citation type="submission" date="2008-11" db="EMBL/GenBank/DDBJ databases">
        <authorList>
            <consortium name="NIH - Xenopus Gene Collection (XGC) project"/>
        </authorList>
    </citation>
    <scope>NUCLEOTIDE SEQUENCE [LARGE SCALE MRNA] (ISOFORM 1)</scope>
    <source>
        <tissue>Gastrula</tissue>
        <tissue>Ovary</tissue>
    </source>
</reference>
<reference key="6">
    <citation type="journal article" date="1998" name="Development">
        <title>Bix1, a direct target of Xenopus T-box genes, causes formation of ventral mesoderm and endoderm.</title>
        <authorList>
            <person name="Tada M."/>
            <person name="Casey E.S."/>
            <person name="Fairclough L."/>
            <person name="Smith J.C."/>
        </authorList>
    </citation>
    <scope>FUNCTION</scope>
</reference>
<reference key="7">
    <citation type="journal article" date="1999" name="Development">
        <title>derriere: a TGF-beta family member required for posterior development in Xenopus.</title>
        <authorList>
            <person name="Sun B.I."/>
            <person name="Bush S.M."/>
            <person name="Collins-Racie L.A."/>
            <person name="LaVallie E.R."/>
            <person name="DiBlasio-Smith E.A."/>
            <person name="Wolfman N.M."/>
            <person name="McCoy J.M."/>
            <person name="Sive H.L."/>
        </authorList>
    </citation>
    <scope>INDUCTION</scope>
</reference>
<reference key="8">
    <citation type="journal article" date="1999" name="Development">
        <title>Mode of action of VegT in mesoderm and endoderm formation.</title>
        <authorList>
            <person name="Clements D."/>
            <person name="Friday R.V."/>
            <person name="Woodland H.R."/>
        </authorList>
    </citation>
    <scope>FUNCTION</scope>
</reference>
<reference key="9">
    <citation type="journal article" date="2000" name="Development">
        <title>Regulation of the early expression of the Xenopus nodal-related 1 gene, Xnr1.</title>
        <authorList>
            <person name="Hyde C.E."/>
            <person name="Old R.W."/>
        </authorList>
    </citation>
    <scope>INDUCTION</scope>
</reference>
<reference key="10">
    <citation type="journal article" date="2002" name="Development">
        <title>Effects of heterodimerization and proteolytic processing on Derriere and Nodal activity: implications for mesoderm induction in Xenopus.</title>
        <authorList>
            <person name="Eimon P.M."/>
            <person name="Harland R.M."/>
        </authorList>
    </citation>
    <scope>INDUCTION</scope>
</reference>
<reference key="11">
    <citation type="journal article" date="2002" name="Dev. Biol.">
        <title>A consensus RNA signal that directs germ layer determinants to the vegetal cortex of Xenopus oocytes.</title>
        <authorList>
            <person name="Bubunenko M."/>
            <person name="Kress T.L."/>
            <person name="Vempati U.D."/>
            <person name="Mowry K.L."/>
            <person name="King M.L."/>
        </authorList>
    </citation>
    <scope>TISSUE SPECIFICITY</scope>
</reference>
<reference key="12">
    <citation type="journal article" date="2007" name="EMBO J.">
        <title>POU-V factors antagonize maternal VegT activity and beta-Catenin signaling in Xenopus embryos.</title>
        <authorList>
            <person name="Cao Y."/>
            <person name="Siegel D."/>
            <person name="Donow C."/>
            <person name="Knochel S."/>
            <person name="Yuan L."/>
            <person name="Knochel W."/>
        </authorList>
    </citation>
    <scope>FUNCTION</scope>
    <scope>INTERACTION WITH TCF7L1; POU5F1.1; POU5F1.2 AND POU5F1.3</scope>
</reference>
<keyword id="KW-0010">Activator</keyword>
<keyword id="KW-0025">Alternative splicing</keyword>
<keyword id="KW-0217">Developmental protein</keyword>
<keyword id="KW-0238">DNA-binding</keyword>
<keyword id="KW-0539">Nucleus</keyword>
<keyword id="KW-1185">Reference proteome</keyword>
<keyword id="KW-0804">Transcription</keyword>
<keyword id="KW-0805">Transcription regulation</keyword>
<sequence>MRNCCRECGLSAGHLEPEASSNCASDVKSSPDMDSVSSQDSLYLPNTVGASLEDQDLWSQFHQEGTEMIITKSGRRMFPQCKIRLFGLHPYAKYMLLVDFVPLDNFRYKWNKNQWEAAGKAEPHPPCRTYVHPDSPAPGAHWMKDPICFQKLKLTNNTLDQQGHIILHSMHRYKPRFHVVQSDDMYNSPWGLVQVFSFPETEFTSVTAYQNEKITKLKINHNPFAKGFREQERSHKRDDVLKILQQSPSKRQKRKKWEDSPEADISDFPKAICVKEESIMDPAGVYQNWVSDHEANQGLTPHSPESEGANQEQQVPTSSSNFYNKSHYRRSSQHLSSPFELGEPSSRRLTPDIATVPDSDPDSLAVFHVIPTQNSAPERTCSMNFSMEAPMKQPLRGAMYSPYGADQWLVPAQGQYRPVGYTAYPTDLSTQGAVAHPHSAMSDWSQYSLFPYSCW</sequence>
<dbReference type="EMBL" id="U59483">
    <property type="protein sequence ID" value="AAB93301.1"/>
    <property type="molecule type" value="mRNA"/>
</dbReference>
<dbReference type="EMBL" id="X99905">
    <property type="protein sequence ID" value="CAA68179.1"/>
    <property type="molecule type" value="mRNA"/>
</dbReference>
<dbReference type="EMBL" id="U89707">
    <property type="protein sequence ID" value="AAB49478.1"/>
    <property type="molecule type" value="mRNA"/>
</dbReference>
<dbReference type="EMBL" id="BC130162">
    <property type="protein sequence ID" value="AAI30163.1"/>
    <property type="molecule type" value="mRNA"/>
</dbReference>
<dbReference type="EMBL" id="BC160675">
    <property type="protein sequence ID" value="AAI60675.1"/>
    <property type="molecule type" value="mRNA"/>
</dbReference>
<dbReference type="EMBL" id="BC170433">
    <property type="protein sequence ID" value="AAI70433.1"/>
    <property type="molecule type" value="mRNA"/>
</dbReference>
<dbReference type="EMBL" id="BC170435">
    <property type="protein sequence ID" value="AAI70435.1"/>
    <property type="molecule type" value="mRNA"/>
</dbReference>
<dbReference type="RefSeq" id="NP_001081665.1">
    <property type="nucleotide sequence ID" value="NM_001088196.1"/>
</dbReference>
<dbReference type="RefSeq" id="XP_018088382.1">
    <molecule id="P87377-2"/>
    <property type="nucleotide sequence ID" value="XM_018232893.1"/>
</dbReference>
<dbReference type="SMR" id="P87377"/>
<dbReference type="IntAct" id="P87377">
    <property type="interactions" value="4"/>
</dbReference>
<dbReference type="MINT" id="P87377"/>
<dbReference type="GeneID" id="397986"/>
<dbReference type="KEGG" id="xla:397986"/>
<dbReference type="AGR" id="Xenbase:XB-GENE-6252142"/>
<dbReference type="CTD" id="397986"/>
<dbReference type="Xenbase" id="XB-GENE-6252142">
    <property type="gene designation" value="vegt.L"/>
</dbReference>
<dbReference type="OMA" id="DPRDMYS"/>
<dbReference type="OrthoDB" id="7442607at2759"/>
<dbReference type="Proteomes" id="UP000186698">
    <property type="component" value="Chromosome 1L"/>
</dbReference>
<dbReference type="Bgee" id="397986">
    <property type="expression patterns" value="Expressed in gastrula and 7 other cell types or tissues"/>
</dbReference>
<dbReference type="GO" id="GO:0000785">
    <property type="term" value="C:chromatin"/>
    <property type="evidence" value="ECO:0000318"/>
    <property type="project" value="GO_Central"/>
</dbReference>
<dbReference type="GO" id="GO:0005634">
    <property type="term" value="C:nucleus"/>
    <property type="evidence" value="ECO:0000314"/>
    <property type="project" value="UniProtKB"/>
</dbReference>
<dbReference type="GO" id="GO:0005667">
    <property type="term" value="C:transcription regulator complex"/>
    <property type="evidence" value="ECO:0000353"/>
    <property type="project" value="UniProtKB"/>
</dbReference>
<dbReference type="GO" id="GO:0003700">
    <property type="term" value="F:DNA-binding transcription factor activity"/>
    <property type="evidence" value="ECO:0000314"/>
    <property type="project" value="UniProtKB"/>
</dbReference>
<dbReference type="GO" id="GO:0000981">
    <property type="term" value="F:DNA-binding transcription factor activity, RNA polymerase II-specific"/>
    <property type="evidence" value="ECO:0000318"/>
    <property type="project" value="GO_Central"/>
</dbReference>
<dbReference type="GO" id="GO:0140297">
    <property type="term" value="F:DNA-binding transcription factor binding"/>
    <property type="evidence" value="ECO:0000353"/>
    <property type="project" value="UniProtKB"/>
</dbReference>
<dbReference type="GO" id="GO:0000978">
    <property type="term" value="F:RNA polymerase II cis-regulatory region sequence-specific DNA binding"/>
    <property type="evidence" value="ECO:0000318"/>
    <property type="project" value="GO_Central"/>
</dbReference>
<dbReference type="GO" id="GO:0043565">
    <property type="term" value="F:sequence-specific DNA binding"/>
    <property type="evidence" value="ECO:0000314"/>
    <property type="project" value="UniProtKB"/>
</dbReference>
<dbReference type="GO" id="GO:0000976">
    <property type="term" value="F:transcription cis-regulatory region binding"/>
    <property type="evidence" value="ECO:0000314"/>
    <property type="project" value="UniProtKB"/>
</dbReference>
<dbReference type="GO" id="GO:0001708">
    <property type="term" value="P:cell fate specification"/>
    <property type="evidence" value="ECO:0000318"/>
    <property type="project" value="GO_Central"/>
</dbReference>
<dbReference type="GO" id="GO:0001707">
    <property type="term" value="P:mesoderm formation"/>
    <property type="evidence" value="ECO:0000315"/>
    <property type="project" value="UniProtKB"/>
</dbReference>
<dbReference type="GO" id="GO:0045893">
    <property type="term" value="P:positive regulation of DNA-templated transcription"/>
    <property type="evidence" value="ECO:0000314"/>
    <property type="project" value="UniProtKB"/>
</dbReference>
<dbReference type="GO" id="GO:0045944">
    <property type="term" value="P:positive regulation of transcription by RNA polymerase II"/>
    <property type="evidence" value="ECO:0000314"/>
    <property type="project" value="UniProtKB"/>
</dbReference>
<dbReference type="GO" id="GO:0006355">
    <property type="term" value="P:regulation of DNA-templated transcription"/>
    <property type="evidence" value="ECO:0000314"/>
    <property type="project" value="UniProtKB"/>
</dbReference>
<dbReference type="GO" id="GO:0006357">
    <property type="term" value="P:regulation of transcription by RNA polymerase II"/>
    <property type="evidence" value="ECO:0000318"/>
    <property type="project" value="GO_Central"/>
</dbReference>
<dbReference type="CDD" id="cd20197">
    <property type="entry name" value="T-box_VegT-like"/>
    <property type="match status" value="1"/>
</dbReference>
<dbReference type="FunFam" id="2.60.40.820:FF:000007">
    <property type="entry name" value="T-box transcription factor"/>
    <property type="match status" value="1"/>
</dbReference>
<dbReference type="Gene3D" id="2.60.40.820">
    <property type="entry name" value="Transcription factor, T-box"/>
    <property type="match status" value="1"/>
</dbReference>
<dbReference type="InterPro" id="IPR008967">
    <property type="entry name" value="p53-like_TF_DNA-bd_sf"/>
</dbReference>
<dbReference type="InterPro" id="IPR046360">
    <property type="entry name" value="T-box_DNA-bd"/>
</dbReference>
<dbReference type="InterPro" id="IPR036960">
    <property type="entry name" value="T-box_sf"/>
</dbReference>
<dbReference type="InterPro" id="IPR001699">
    <property type="entry name" value="TF_T-box"/>
</dbReference>
<dbReference type="InterPro" id="IPR018186">
    <property type="entry name" value="TF_T-box_CS"/>
</dbReference>
<dbReference type="PANTHER" id="PTHR11267:SF200">
    <property type="entry name" value="MGA, MAX DIMERIZATION PROTEIN"/>
    <property type="match status" value="1"/>
</dbReference>
<dbReference type="PANTHER" id="PTHR11267">
    <property type="entry name" value="T-BOX PROTEIN-RELATED"/>
    <property type="match status" value="1"/>
</dbReference>
<dbReference type="Pfam" id="PF00907">
    <property type="entry name" value="T-box"/>
    <property type="match status" value="1"/>
</dbReference>
<dbReference type="PRINTS" id="PR00937">
    <property type="entry name" value="TBOX"/>
</dbReference>
<dbReference type="SMART" id="SM00425">
    <property type="entry name" value="TBOX"/>
    <property type="match status" value="1"/>
</dbReference>
<dbReference type="SUPFAM" id="SSF49417">
    <property type="entry name" value="p53-like transcription factors"/>
    <property type="match status" value="1"/>
</dbReference>
<dbReference type="PROSITE" id="PS01283">
    <property type="entry name" value="TBOX_1"/>
    <property type="match status" value="1"/>
</dbReference>
<dbReference type="PROSITE" id="PS01264">
    <property type="entry name" value="TBOX_2"/>
    <property type="match status" value="1"/>
</dbReference>
<dbReference type="PROSITE" id="PS50252">
    <property type="entry name" value="TBOX_3"/>
    <property type="match status" value="1"/>
</dbReference>
<organism>
    <name type="scientific">Xenopus laevis</name>
    <name type="common">African clawed frog</name>
    <dbReference type="NCBI Taxonomy" id="8355"/>
    <lineage>
        <taxon>Eukaryota</taxon>
        <taxon>Metazoa</taxon>
        <taxon>Chordata</taxon>
        <taxon>Craniata</taxon>
        <taxon>Vertebrata</taxon>
        <taxon>Euteleostomi</taxon>
        <taxon>Amphibia</taxon>
        <taxon>Batrachia</taxon>
        <taxon>Anura</taxon>
        <taxon>Pipoidea</taxon>
        <taxon>Pipidae</taxon>
        <taxon>Xenopodinae</taxon>
        <taxon>Xenopus</taxon>
        <taxon>Xenopus</taxon>
    </lineage>
</organism>
<protein>
    <recommendedName>
        <fullName>T-box protein VegT-A</fullName>
    </recommendedName>
    <alternativeName>
        <fullName>Brachyury and Tbx-related protein</fullName>
        <shortName>T-box protein Brat</shortName>
    </alternativeName>
    <alternativeName>
        <fullName>T-box protein Antipodean</fullName>
    </alternativeName>
</protein>
<comment type="function">
    <text evidence="4 8 9 10 11 12">Transcription factor required for both mesoderm and endoderm formation in the embryo; signaling determinants and concentration levels may determine which germ layer is formed. Acts together with beta-catenin to activate genes that are responsible for mesoderm induction including wnt-8, eomes t/bra, siamois, mix1 and sox17. Directly binds to promoter DNA. Patterns the mesoderm along the dorsoventral and posterior axis. Activates siamois gene transcription when alone or in combination with beta-catenin, but inhibits siamois transcription in combination with pou5f1.1/oct-25.</text>
</comment>
<comment type="subunit">
    <text evidence="8">Forms a repression complex on the promoters of the nodal/nr1 and siamois genes with the maternal factors tcf7l1/tcf3 and pouf5.1/oct-25. Interacts (via C-terminus) with tcf7l1/tcf3 (via N-terminus). Also interacts with the other POU-domain transcription factors pou5f1.2/oct-91 and pou5f1.3/oct-60.</text>
</comment>
<comment type="interaction">
    <interactant intactId="EBI-7439000">
        <id>P87377</id>
    </interactant>
    <interactant intactId="EBI-7438970">
        <id>Q7T103</id>
        <label>pou5f1.1</label>
    </interactant>
    <organismsDiffer>false</organismsDiffer>
    <experiments>3</experiments>
</comment>
<comment type="interaction">
    <interactant intactId="EBI-7439000">
        <id>P87377</id>
    </interactant>
    <interactant intactId="EBI-7439087">
        <id>Q90ZB6</id>
        <label>tcf7l1-b</label>
    </interactant>
    <organismsDiffer>false</organismsDiffer>
    <experiments>4</experiments>
</comment>
<comment type="subcellular location">
    <subcellularLocation>
        <location evidence="1 9">Nucleus</location>
    </subcellularLocation>
</comment>
<comment type="alternative products">
    <event type="alternative splicing"/>
    <isoform>
        <id>P87377-1</id>
        <name>1</name>
        <sequence type="displayed"/>
    </isoform>
    <isoform>
        <id>P87377-2</id>
        <name>2</name>
        <sequence type="described" ref="VSP_038540"/>
    </isoform>
</comment>
<comment type="tissue specificity">
    <text evidence="7 9 10 11">Uniformly distributed in stage I oocytes but becomes localized to the vegetal hemisphere by stage II and remains so thereafter throughout oogenesis and the early embryonic cleavage stages. Zygotic expression parallels blastopore formation and shifts from dorsal expression in the marginal zone of late blastula and early gastrula stages to a ventral/lateral expression at the posterior end of later stage embryos. Expression is excluded from the notochord. In tailbud and tadpole stages, expressed exclusively in a subset of posterior Rohon-Beard neurons.</text>
</comment>
<comment type="developmental stage">
    <text evidence="9 10 11">Expressed both maternally and zygotically. Maternally expressed from early oogenesis. Zygotic expression occurs from late blastula and reaches maximum levels during gastrulation (stages 10.5-12). Levels decline at the time of blastopore closure (stage 13).</text>
</comment>
<comment type="induction">
    <text evidence="3 5 6 11">By mesoderm inducing factors and TGF-beta family members including nodal/nr-1 acting in an autoregulatory loop, nodal2/nr-2 derriere, bFGF and activin B.</text>
</comment>
<comment type="miscellaneous">
    <text>Was named Antipodean by PubMed:9012537 because of its localization to the vegetal hemisphere of the egg.</text>
</comment>
<proteinExistence type="evidence at protein level"/>
<name>VEGTA_XENLA</name>
<feature type="chain" id="PRO_0000184462" description="T-box protein VegT-A">
    <location>
        <begin position="1"/>
        <end position="455"/>
    </location>
</feature>
<feature type="DNA-binding region" description="T-box" evidence="1">
    <location>
        <begin position="57"/>
        <end position="230"/>
    </location>
</feature>
<feature type="region of interest" description="Disordered" evidence="2">
    <location>
        <begin position="21"/>
        <end position="40"/>
    </location>
</feature>
<feature type="region of interest" description="Disordered" evidence="2">
    <location>
        <begin position="229"/>
        <end position="262"/>
    </location>
</feature>
<feature type="region of interest" description="Disordered" evidence="2">
    <location>
        <begin position="295"/>
        <end position="346"/>
    </location>
</feature>
<feature type="compositionally biased region" description="Basic and acidic residues" evidence="2">
    <location>
        <begin position="229"/>
        <end position="241"/>
    </location>
</feature>
<feature type="compositionally biased region" description="Polar residues" evidence="2">
    <location>
        <begin position="308"/>
        <end position="324"/>
    </location>
</feature>
<feature type="splice variant" id="VSP_038540" description="In isoform 2." evidence="13">
    <original>MRNCCRECGLSAGHLEPEASSNCAS</original>
    <variation>MHSLP</variation>
    <location>
        <begin position="1"/>
        <end position="25"/>
    </location>
</feature>
<feature type="sequence conflict" description="In Ref. 4; AAB49478." evidence="14" ref="4">
    <original>L</original>
    <variation>H</variation>
    <location>
        <position position="244"/>
    </location>
</feature>
<feature type="sequence conflict" description="In Ref. 5; AAI60675." evidence="14" ref="5">
    <original>T</original>
    <variation>P</variation>
    <location>
        <position position="350"/>
    </location>
</feature>
<evidence type="ECO:0000255" key="1">
    <source>
        <dbReference type="PROSITE-ProRule" id="PRU00201"/>
    </source>
</evidence>
<evidence type="ECO:0000256" key="2">
    <source>
        <dbReference type="SAM" id="MobiDB-lite"/>
    </source>
</evidence>
<evidence type="ECO:0000269" key="3">
    <source>
    </source>
</evidence>
<evidence type="ECO:0000269" key="4">
    <source>
    </source>
</evidence>
<evidence type="ECO:0000269" key="5">
    <source>
    </source>
</evidence>
<evidence type="ECO:0000269" key="6">
    <source>
    </source>
</evidence>
<evidence type="ECO:0000269" key="7">
    <source>
    </source>
</evidence>
<evidence type="ECO:0000269" key="8">
    <source>
    </source>
</evidence>
<evidence type="ECO:0000269" key="9">
    <source>
    </source>
</evidence>
<evidence type="ECO:0000269" key="10">
    <source>
    </source>
</evidence>
<evidence type="ECO:0000269" key="11">
    <source>
    </source>
</evidence>
<evidence type="ECO:0000269" key="12">
    <source>
    </source>
</evidence>
<evidence type="ECO:0000303" key="13">
    <source>
    </source>
</evidence>
<evidence type="ECO:0000305" key="14"/>